<evidence type="ECO:0000250" key="1">
    <source>
        <dbReference type="UniProtKB" id="P22289"/>
    </source>
</evidence>
<evidence type="ECO:0000305" key="2"/>
<name>QCR9_SOLTU</name>
<accession>P46270</accession>
<organism>
    <name type="scientific">Solanum tuberosum</name>
    <name type="common">Potato</name>
    <dbReference type="NCBI Taxonomy" id="4113"/>
    <lineage>
        <taxon>Eukaryota</taxon>
        <taxon>Viridiplantae</taxon>
        <taxon>Streptophyta</taxon>
        <taxon>Embryophyta</taxon>
        <taxon>Tracheophyta</taxon>
        <taxon>Spermatophyta</taxon>
        <taxon>Magnoliopsida</taxon>
        <taxon>eudicotyledons</taxon>
        <taxon>Gunneridae</taxon>
        <taxon>Pentapetalae</taxon>
        <taxon>asterids</taxon>
        <taxon>lamiids</taxon>
        <taxon>Solanales</taxon>
        <taxon>Solanaceae</taxon>
        <taxon>Solanoideae</taxon>
        <taxon>Solaneae</taxon>
        <taxon>Solanum</taxon>
    </lineage>
</organism>
<sequence length="72" mass="8048">MESAARRSGGGVLEGFYRLVMRRTPVYVTFVIAGALLGERAVDYGVKTLWEKNNVGKRYEDISVLGQRPVDE</sequence>
<comment type="function">
    <text evidence="1">Component of the ubiquinol-cytochrome c oxidoreductase, a multisubunit transmembrane complex that is part of the mitochondrial electron transport chain which drives oxidative phosphorylation. The respiratory chain contains 3 multisubunit complexes succinate dehydrogenase (complex II, CII), ubiquinol-cytochrome c oxidoreductase (cytochrome b-c1 complex, complex III, CIII) and cytochrome c oxidase (complex IV, CIV), that cooperate to transfer electrons derived from NADH and succinate to molecular oxygen, creating an electrochemical gradient over the inner membrane that drives transmembrane transport and the ATP synthase. The cytochrome b-c1 complex catalyzes electron transfer from ubiquinol to cytochrome c, linking this redox reaction to translocation of protons across the mitochondrial inner membrane, with protons being carried across the membrane as hydrogens on the quinol. In the process called Q cycle, 2 protons are consumed from the matrix, 4 protons are released into the intermembrane space and 2 electrons are passed to cytochrome c.</text>
</comment>
<comment type="subunit">
    <text evidence="1">Component of the ubiquinol-cytochrome c oxidoreductase (cytochrome b-c1 complex, complex III, CIII), a multisubunit enzyme composed of 3 respiratory subunits cytochrome b, cytochrome c1 and Rieske protein, 2 core protein subunits, and additional low-molecular weight protein subunits. The complex exists as an obligatory dimer and forms supercomplexes (SCs) in the inner mitochondrial membrane with cytochrome c oxidase (complex IV, CIV).</text>
</comment>
<comment type="subcellular location">
    <subcellularLocation>
        <location evidence="1">Mitochondrion inner membrane</location>
        <topology evidence="1">Single-pass membrane protein</topology>
    </subcellularLocation>
</comment>
<comment type="similarity">
    <text evidence="2">Belongs to the UQCR10/QCR9 family.</text>
</comment>
<dbReference type="EMBL" id="X79274">
    <property type="protein sequence ID" value="CAA55861.1"/>
    <property type="molecule type" value="mRNA"/>
</dbReference>
<dbReference type="PIR" id="T07369">
    <property type="entry name" value="T07369"/>
</dbReference>
<dbReference type="SMR" id="P46270"/>
<dbReference type="FunCoup" id="P46270">
    <property type="interactions" value="1076"/>
</dbReference>
<dbReference type="STRING" id="4113.P46270"/>
<dbReference type="PaxDb" id="4113-PGSC0003DMT400067732"/>
<dbReference type="EnsemblPlants" id="PGSC0003DMT400067733">
    <property type="protein sequence ID" value="PGSC0003DMT400067733"/>
    <property type="gene ID" value="PGSC0003DMG400026342"/>
</dbReference>
<dbReference type="Gramene" id="PGSC0003DMT400067733">
    <property type="protein sequence ID" value="PGSC0003DMT400067733"/>
    <property type="gene ID" value="PGSC0003DMG400026342"/>
</dbReference>
<dbReference type="eggNOG" id="KOG3494">
    <property type="taxonomic scope" value="Eukaryota"/>
</dbReference>
<dbReference type="HOGENOM" id="CLU_171977_4_0_1"/>
<dbReference type="InParanoid" id="P46270"/>
<dbReference type="OMA" id="MLCIGAY"/>
<dbReference type="Proteomes" id="UP000011115">
    <property type="component" value="Unassembled WGS sequence"/>
</dbReference>
<dbReference type="ExpressionAtlas" id="P46270">
    <property type="expression patterns" value="baseline and differential"/>
</dbReference>
<dbReference type="GO" id="GO:0005743">
    <property type="term" value="C:mitochondrial inner membrane"/>
    <property type="evidence" value="ECO:0007669"/>
    <property type="project" value="UniProtKB-SubCell"/>
</dbReference>
<dbReference type="GO" id="GO:0045275">
    <property type="term" value="C:respiratory chain complex III"/>
    <property type="evidence" value="ECO:0000318"/>
    <property type="project" value="GO_Central"/>
</dbReference>
<dbReference type="GO" id="GO:0006122">
    <property type="term" value="P:mitochondrial electron transport, ubiquinol to cytochrome c"/>
    <property type="evidence" value="ECO:0000318"/>
    <property type="project" value="GO_Central"/>
</dbReference>
<dbReference type="FunFam" id="1.20.5.260:FF:000002">
    <property type="entry name" value="cytochrome b-c1 complex subunit 9"/>
    <property type="match status" value="1"/>
</dbReference>
<dbReference type="Gene3D" id="1.20.5.260">
    <property type="entry name" value="Cytochrome b-c1 complex subunit 9"/>
    <property type="match status" value="1"/>
</dbReference>
<dbReference type="InterPro" id="IPR008027">
    <property type="entry name" value="QCR9"/>
</dbReference>
<dbReference type="InterPro" id="IPR036656">
    <property type="entry name" value="QCR9_sf"/>
</dbReference>
<dbReference type="PANTHER" id="PTHR12980:SF10">
    <property type="entry name" value="CYTOCHROME B-C1 COMPLEX SUBUNIT 9"/>
    <property type="match status" value="1"/>
</dbReference>
<dbReference type="PANTHER" id="PTHR12980">
    <property type="entry name" value="UBIQUINOL-CYTOCHROME C REDUCTASE COMPLEX, SUBUNIT X"/>
    <property type="match status" value="1"/>
</dbReference>
<dbReference type="Pfam" id="PF05365">
    <property type="entry name" value="UCR_UQCRX_QCR9"/>
    <property type="match status" value="1"/>
</dbReference>
<dbReference type="SUPFAM" id="SSF81514">
    <property type="entry name" value="Subunit X (non-heme 7 kDa protein) of cytochrome bc1 complex (Ubiquinol-cytochrome c reductase)"/>
    <property type="match status" value="1"/>
</dbReference>
<protein>
    <recommendedName>
        <fullName>Cytochrome b-c1 complex subunit 9</fullName>
    </recommendedName>
    <alternativeName>
        <fullName>Complex III subunit 9</fullName>
    </alternativeName>
    <alternativeName>
        <fullName>Complex III subunit X</fullName>
    </alternativeName>
    <alternativeName>
        <fullName>Ubiquinol-cytochrome c reductase complex 8.0 kDa protein</fullName>
    </alternativeName>
</protein>
<feature type="chain" id="PRO_0000193556" description="Cytochrome b-c1 complex subunit 9">
    <location>
        <begin position="1"/>
        <end position="72"/>
    </location>
</feature>
<feature type="topological domain" description="Mitochondrial matrix" evidence="1">
    <location>
        <begin position="1"/>
        <end position="27"/>
    </location>
</feature>
<feature type="transmembrane region" description="Helical" evidence="1">
    <location>
        <begin position="28"/>
        <end position="53"/>
    </location>
</feature>
<feature type="topological domain" description="Mitochondrial intermembrane" evidence="1">
    <location>
        <begin position="54"/>
        <end position="72"/>
    </location>
</feature>
<keyword id="KW-0903">Direct protein sequencing</keyword>
<keyword id="KW-0249">Electron transport</keyword>
<keyword id="KW-0472">Membrane</keyword>
<keyword id="KW-0496">Mitochondrion</keyword>
<keyword id="KW-0999">Mitochondrion inner membrane</keyword>
<keyword id="KW-1185">Reference proteome</keyword>
<keyword id="KW-0679">Respiratory chain</keyword>
<keyword id="KW-0812">Transmembrane</keyword>
<keyword id="KW-1133">Transmembrane helix</keyword>
<keyword id="KW-0813">Transport</keyword>
<proteinExistence type="evidence at protein level"/>
<reference key="1">
    <citation type="journal article" date="1995" name="Biochim. Biophys. Acta">
        <title>Molecular structure of the 8.0 kDa subunit of cytochrome-c reductase from potato and its delta psi-dependent import into isolated mitochondria.</title>
        <authorList>
            <person name="Braun H.-P."/>
            <person name="Schmitz U.K."/>
        </authorList>
    </citation>
    <scope>NUCLEOTIDE SEQUENCE [MRNA]</scope>
    <scope>PROTEIN SEQUENCE OF 1-17</scope>
    <source>
        <strain>cv. Desiree</strain>
        <tissue>Tuber</tissue>
    </source>
</reference>
<reference key="2">
    <citation type="journal article" date="2011" name="Nature">
        <title>Genome sequence and analysis of the tuber crop potato.</title>
        <authorList>
            <consortium name="The Potato Genome Sequencing Consortium"/>
        </authorList>
    </citation>
    <scope>NUCLEOTIDE SEQUENCE [LARGE SCALE GENOMIC DNA]</scope>
    <source>
        <strain>cv. DM1-3 516 R44</strain>
    </source>
</reference>
<reference key="3">
    <citation type="journal article" date="1994" name="Planta">
        <title>Molecular identification of the ten subunits of cytochrome-c reductase from potato mitochondria.</title>
        <authorList>
            <person name="Braun H.-P."/>
            <person name="Kruft V."/>
            <person name="Schmitz U.K."/>
        </authorList>
    </citation>
    <scope>PROTEIN SEQUENCE OF 48-52 AND 57-72</scope>
    <source>
        <strain>cv. Hansa</strain>
        <tissue>Tuber</tissue>
    </source>
</reference>